<dbReference type="EMBL" id="AE006914">
    <property type="protein sequence ID" value="AAL02872.1"/>
    <property type="molecule type" value="Genomic_DNA"/>
</dbReference>
<dbReference type="PIR" id="F97741">
    <property type="entry name" value="F97741"/>
</dbReference>
<dbReference type="RefSeq" id="WP_010976989.1">
    <property type="nucleotide sequence ID" value="NC_003103.1"/>
</dbReference>
<dbReference type="SMR" id="Q92IT6"/>
<dbReference type="GeneID" id="927507"/>
<dbReference type="KEGG" id="rco:RC0334"/>
<dbReference type="PATRIC" id="fig|272944.4.peg.383"/>
<dbReference type="HOGENOM" id="CLU_061141_2_1_5"/>
<dbReference type="Proteomes" id="UP000000816">
    <property type="component" value="Chromosome"/>
</dbReference>
<dbReference type="GO" id="GO:0032153">
    <property type="term" value="C:cell division site"/>
    <property type="evidence" value="ECO:0007669"/>
    <property type="project" value="UniProtKB-UniRule"/>
</dbReference>
<dbReference type="GO" id="GO:0005886">
    <property type="term" value="C:plasma membrane"/>
    <property type="evidence" value="ECO:0007669"/>
    <property type="project" value="UniProtKB-SubCell"/>
</dbReference>
<dbReference type="GO" id="GO:0090529">
    <property type="term" value="P:cell septum assembly"/>
    <property type="evidence" value="ECO:0007669"/>
    <property type="project" value="InterPro"/>
</dbReference>
<dbReference type="GO" id="GO:0043093">
    <property type="term" value="P:FtsZ-dependent cytokinesis"/>
    <property type="evidence" value="ECO:0007669"/>
    <property type="project" value="UniProtKB-UniRule"/>
</dbReference>
<dbReference type="Gene3D" id="3.10.20.310">
    <property type="entry name" value="membrane protein fhac"/>
    <property type="match status" value="1"/>
</dbReference>
<dbReference type="HAMAP" id="MF_00911">
    <property type="entry name" value="FtsQ_subfam"/>
    <property type="match status" value="1"/>
</dbReference>
<dbReference type="InterPro" id="IPR005548">
    <property type="entry name" value="Cell_div_FtsQ/DivIB_C"/>
</dbReference>
<dbReference type="InterPro" id="IPR026579">
    <property type="entry name" value="FtsQ"/>
</dbReference>
<dbReference type="InterPro" id="IPR034746">
    <property type="entry name" value="POTRA"/>
</dbReference>
<dbReference type="InterPro" id="IPR013685">
    <property type="entry name" value="POTRA_FtsQ_type"/>
</dbReference>
<dbReference type="PANTHER" id="PTHR35851">
    <property type="entry name" value="CELL DIVISION PROTEIN FTSQ"/>
    <property type="match status" value="1"/>
</dbReference>
<dbReference type="PANTHER" id="PTHR35851:SF1">
    <property type="entry name" value="CELL DIVISION PROTEIN FTSQ"/>
    <property type="match status" value="1"/>
</dbReference>
<dbReference type="Pfam" id="PF03799">
    <property type="entry name" value="FtsQ_DivIB_C"/>
    <property type="match status" value="1"/>
</dbReference>
<dbReference type="Pfam" id="PF08478">
    <property type="entry name" value="POTRA_1"/>
    <property type="match status" value="1"/>
</dbReference>
<dbReference type="PROSITE" id="PS51779">
    <property type="entry name" value="POTRA"/>
    <property type="match status" value="1"/>
</dbReference>
<proteinExistence type="inferred from homology"/>
<sequence length="267" mass="31097">MRKKTSSNKKKQTKKTNNISLRRKLGLMYKKAILGLKIALIIFVCLFVFTKYFAGIKTYLTTNIYQTTTKLGFKLENVIIEGQQNVDEPTILKVLNANKGSPIFALKLDEIRNNLKKNKWIKEVYVSRRLPNTVYIKLFEREPIAIWQINNQLFLVDEEGYEISKNIQPFPHLLHVVGEGANIYAGTLVLELQKYPALMNKTSAAVRLGDRRWDLNLKGNISIKLPEKEFEEALKYVDALNKANKLFNQNYKVLDLRDKNKYYIEKY</sequence>
<evidence type="ECO:0000255" key="1">
    <source>
        <dbReference type="HAMAP-Rule" id="MF_00911"/>
    </source>
</evidence>
<evidence type="ECO:0000255" key="2">
    <source>
        <dbReference type="PROSITE-ProRule" id="PRU01115"/>
    </source>
</evidence>
<accession>Q92IT6</accession>
<protein>
    <recommendedName>
        <fullName evidence="1">Cell division protein FtsQ</fullName>
    </recommendedName>
</protein>
<reference key="1">
    <citation type="journal article" date="2001" name="Science">
        <title>Mechanisms of evolution in Rickettsia conorii and R. prowazekii.</title>
        <authorList>
            <person name="Ogata H."/>
            <person name="Audic S."/>
            <person name="Renesto-Audiffren P."/>
            <person name="Fournier P.-E."/>
            <person name="Barbe V."/>
            <person name="Samson D."/>
            <person name="Roux V."/>
            <person name="Cossart P."/>
            <person name="Weissenbach J."/>
            <person name="Claverie J.-M."/>
            <person name="Raoult D."/>
        </authorList>
    </citation>
    <scope>NUCLEOTIDE SEQUENCE [LARGE SCALE GENOMIC DNA]</scope>
    <source>
        <strain>ATCC VR-613 / Malish 7</strain>
    </source>
</reference>
<organism>
    <name type="scientific">Rickettsia conorii (strain ATCC VR-613 / Malish 7)</name>
    <dbReference type="NCBI Taxonomy" id="272944"/>
    <lineage>
        <taxon>Bacteria</taxon>
        <taxon>Pseudomonadati</taxon>
        <taxon>Pseudomonadota</taxon>
        <taxon>Alphaproteobacteria</taxon>
        <taxon>Rickettsiales</taxon>
        <taxon>Rickettsiaceae</taxon>
        <taxon>Rickettsieae</taxon>
        <taxon>Rickettsia</taxon>
        <taxon>spotted fever group</taxon>
    </lineage>
</organism>
<name>FTSQ_RICCN</name>
<feature type="chain" id="PRO_0000280970" description="Cell division protein FtsQ">
    <location>
        <begin position="1"/>
        <end position="267"/>
    </location>
</feature>
<feature type="topological domain" description="Cytoplasmic" evidence="1">
    <location>
        <begin position="1"/>
        <end position="32"/>
    </location>
</feature>
<feature type="transmembrane region" description="Helical" evidence="1">
    <location>
        <begin position="33"/>
        <end position="53"/>
    </location>
</feature>
<feature type="topological domain" description="Periplasmic" evidence="1">
    <location>
        <begin position="54"/>
        <end position="267"/>
    </location>
</feature>
<feature type="domain" description="POTRA" evidence="2">
    <location>
        <begin position="73"/>
        <end position="141"/>
    </location>
</feature>
<keyword id="KW-0131">Cell cycle</keyword>
<keyword id="KW-0132">Cell division</keyword>
<keyword id="KW-0997">Cell inner membrane</keyword>
<keyword id="KW-1003">Cell membrane</keyword>
<keyword id="KW-0472">Membrane</keyword>
<keyword id="KW-0812">Transmembrane</keyword>
<keyword id="KW-1133">Transmembrane helix</keyword>
<comment type="function">
    <text evidence="1">Essential cell division protein.</text>
</comment>
<comment type="subcellular location">
    <subcellularLocation>
        <location evidence="1">Cell inner membrane</location>
        <topology evidence="1">Single-pass type II membrane protein</topology>
    </subcellularLocation>
    <text evidence="1">Localizes to the division septum.</text>
</comment>
<comment type="similarity">
    <text evidence="1">Belongs to the FtsQ/DivIB family. FtsQ subfamily.</text>
</comment>
<gene>
    <name evidence="1" type="primary">ftsQ</name>
    <name type="ordered locus">RC0334</name>
</gene>